<proteinExistence type="inferred from homology"/>
<comment type="function">
    <text evidence="1">Catalyzes the decarboxylation of orotidine 5'-monophosphate (OMP) to uridine 5'-monophosphate (UMP).</text>
</comment>
<comment type="catalytic activity">
    <reaction evidence="1">
        <text>orotidine 5'-phosphate + H(+) = UMP + CO2</text>
        <dbReference type="Rhea" id="RHEA:11596"/>
        <dbReference type="ChEBI" id="CHEBI:15378"/>
        <dbReference type="ChEBI" id="CHEBI:16526"/>
        <dbReference type="ChEBI" id="CHEBI:57538"/>
        <dbReference type="ChEBI" id="CHEBI:57865"/>
        <dbReference type="EC" id="4.1.1.23"/>
    </reaction>
</comment>
<comment type="pathway">
    <text evidence="1">Pyrimidine metabolism; UMP biosynthesis via de novo pathway; UMP from orotate: step 2/2.</text>
</comment>
<comment type="subunit">
    <text evidence="1">Homodimer.</text>
</comment>
<comment type="similarity">
    <text evidence="1">Belongs to the OMP decarboxylase family. Type 1 subfamily.</text>
</comment>
<dbReference type="EC" id="4.1.1.23" evidence="1"/>
<dbReference type="EMBL" id="CP000768">
    <property type="protein sequence ID" value="ABS43867.1"/>
    <property type="molecule type" value="Genomic_DNA"/>
</dbReference>
<dbReference type="SMR" id="A7H4Z6"/>
<dbReference type="KEGG" id="cjd:JJD26997_1577"/>
<dbReference type="HOGENOM" id="CLU_067069_1_1_7"/>
<dbReference type="UniPathway" id="UPA00070">
    <property type="reaction ID" value="UER00120"/>
</dbReference>
<dbReference type="Proteomes" id="UP000002302">
    <property type="component" value="Chromosome"/>
</dbReference>
<dbReference type="GO" id="GO:0005829">
    <property type="term" value="C:cytosol"/>
    <property type="evidence" value="ECO:0007669"/>
    <property type="project" value="TreeGrafter"/>
</dbReference>
<dbReference type="GO" id="GO:0004590">
    <property type="term" value="F:orotidine-5'-phosphate decarboxylase activity"/>
    <property type="evidence" value="ECO:0007669"/>
    <property type="project" value="UniProtKB-UniRule"/>
</dbReference>
<dbReference type="GO" id="GO:0006207">
    <property type="term" value="P:'de novo' pyrimidine nucleobase biosynthetic process"/>
    <property type="evidence" value="ECO:0007669"/>
    <property type="project" value="InterPro"/>
</dbReference>
<dbReference type="GO" id="GO:0044205">
    <property type="term" value="P:'de novo' UMP biosynthetic process"/>
    <property type="evidence" value="ECO:0007669"/>
    <property type="project" value="UniProtKB-UniRule"/>
</dbReference>
<dbReference type="CDD" id="cd04725">
    <property type="entry name" value="OMP_decarboxylase_like"/>
    <property type="match status" value="1"/>
</dbReference>
<dbReference type="Gene3D" id="3.20.20.70">
    <property type="entry name" value="Aldolase class I"/>
    <property type="match status" value="1"/>
</dbReference>
<dbReference type="HAMAP" id="MF_01200_B">
    <property type="entry name" value="OMPdecase_type1_B"/>
    <property type="match status" value="1"/>
</dbReference>
<dbReference type="InterPro" id="IPR013785">
    <property type="entry name" value="Aldolase_TIM"/>
</dbReference>
<dbReference type="InterPro" id="IPR014732">
    <property type="entry name" value="OMPdecase"/>
</dbReference>
<dbReference type="InterPro" id="IPR018089">
    <property type="entry name" value="OMPdecase_AS"/>
</dbReference>
<dbReference type="InterPro" id="IPR047596">
    <property type="entry name" value="OMPdecase_bac"/>
</dbReference>
<dbReference type="InterPro" id="IPR001754">
    <property type="entry name" value="OMPdeCOase_dom"/>
</dbReference>
<dbReference type="InterPro" id="IPR011060">
    <property type="entry name" value="RibuloseP-bd_barrel"/>
</dbReference>
<dbReference type="NCBIfam" id="NF001273">
    <property type="entry name" value="PRK00230.1"/>
    <property type="match status" value="1"/>
</dbReference>
<dbReference type="NCBIfam" id="TIGR01740">
    <property type="entry name" value="pyrF"/>
    <property type="match status" value="1"/>
</dbReference>
<dbReference type="PANTHER" id="PTHR32119">
    <property type="entry name" value="OROTIDINE 5'-PHOSPHATE DECARBOXYLASE"/>
    <property type="match status" value="1"/>
</dbReference>
<dbReference type="PANTHER" id="PTHR32119:SF2">
    <property type="entry name" value="OROTIDINE 5'-PHOSPHATE DECARBOXYLASE"/>
    <property type="match status" value="1"/>
</dbReference>
<dbReference type="Pfam" id="PF00215">
    <property type="entry name" value="OMPdecase"/>
    <property type="match status" value="1"/>
</dbReference>
<dbReference type="SMART" id="SM00934">
    <property type="entry name" value="OMPdecase"/>
    <property type="match status" value="1"/>
</dbReference>
<dbReference type="SUPFAM" id="SSF51366">
    <property type="entry name" value="Ribulose-phoshate binding barrel"/>
    <property type="match status" value="1"/>
</dbReference>
<dbReference type="PROSITE" id="PS00156">
    <property type="entry name" value="OMPDECASE"/>
    <property type="match status" value="1"/>
</dbReference>
<name>PYRF_CAMJD</name>
<feature type="chain" id="PRO_1000065900" description="Orotidine 5'-phosphate decarboxylase">
    <location>
        <begin position="1"/>
        <end position="226"/>
    </location>
</feature>
<feature type="active site" description="Proton donor" evidence="1">
    <location>
        <position position="60"/>
    </location>
</feature>
<feature type="binding site" evidence="1">
    <location>
        <position position="8"/>
    </location>
    <ligand>
        <name>substrate</name>
    </ligand>
</feature>
<feature type="binding site" evidence="1">
    <location>
        <position position="30"/>
    </location>
    <ligand>
        <name>substrate</name>
    </ligand>
</feature>
<feature type="binding site" evidence="1">
    <location>
        <begin position="58"/>
        <end position="67"/>
    </location>
    <ligand>
        <name>substrate</name>
    </ligand>
</feature>
<feature type="binding site" evidence="1">
    <location>
        <position position="117"/>
    </location>
    <ligand>
        <name>substrate</name>
    </ligand>
</feature>
<feature type="binding site" evidence="1">
    <location>
        <position position="177"/>
    </location>
    <ligand>
        <name>substrate</name>
    </ligand>
</feature>
<feature type="binding site" evidence="1">
    <location>
        <position position="186"/>
    </location>
    <ligand>
        <name>substrate</name>
    </ligand>
</feature>
<feature type="binding site" evidence="1">
    <location>
        <position position="206"/>
    </location>
    <ligand>
        <name>substrate</name>
    </ligand>
</feature>
<feature type="binding site" evidence="1">
    <location>
        <position position="207"/>
    </location>
    <ligand>
        <name>substrate</name>
    </ligand>
</feature>
<keyword id="KW-0210">Decarboxylase</keyword>
<keyword id="KW-0456">Lyase</keyword>
<keyword id="KW-0665">Pyrimidine biosynthesis</keyword>
<gene>
    <name evidence="1" type="primary">pyrF</name>
    <name type="ordered locus">JJD26997_1577</name>
</gene>
<protein>
    <recommendedName>
        <fullName evidence="1">Orotidine 5'-phosphate decarboxylase</fullName>
        <ecNumber evidence="1">4.1.1.23</ecNumber>
    </recommendedName>
    <alternativeName>
        <fullName evidence="1">OMP decarboxylase</fullName>
        <shortName evidence="1">OMPDCase</shortName>
        <shortName evidence="1">OMPdecase</shortName>
    </alternativeName>
</protein>
<reference key="1">
    <citation type="submission" date="2007-07" db="EMBL/GenBank/DDBJ databases">
        <title>Complete genome sequence of Campylobacter jejuni subsp doylei 269.97 isolated from human blood.</title>
        <authorList>
            <person name="Fouts D.E."/>
            <person name="Mongodin E.F."/>
            <person name="Puiu D."/>
            <person name="Sebastian Y."/>
            <person name="Miller W.G."/>
            <person name="Mandrell R.E."/>
            <person name="Lastovica A.J."/>
            <person name="Nelson K.E."/>
        </authorList>
    </citation>
    <scope>NUCLEOTIDE SEQUENCE [LARGE SCALE GENOMIC DNA]</scope>
    <source>
        <strain>ATCC BAA-1458 / RM4099 / 269.97</strain>
    </source>
</reference>
<accession>A7H4Z6</accession>
<evidence type="ECO:0000255" key="1">
    <source>
        <dbReference type="HAMAP-Rule" id="MF_01200"/>
    </source>
</evidence>
<sequence>MKLCVALDLSTKEECLQLTKELKNLDIWLKVGLRAYLRDGFKFIEELKKVDDFKIFLDLKIHDIPNTMADACEEISKLGIDMINIHASAGKIAMQEVMTRLSKFSKRPLVLAVSALTSFDEENFFSIYRQKIEEAVINFSKISYENGLDGMVCSVFESKIIKEHTQKNFLTLTPGIRPFGEKNDDQKRVANLTMARENLSDFIVVGRPIYKDNNPRKICEKILQEI</sequence>
<organism>
    <name type="scientific">Campylobacter jejuni subsp. doylei (strain ATCC BAA-1458 / RM4099 / 269.97)</name>
    <dbReference type="NCBI Taxonomy" id="360109"/>
    <lineage>
        <taxon>Bacteria</taxon>
        <taxon>Pseudomonadati</taxon>
        <taxon>Campylobacterota</taxon>
        <taxon>Epsilonproteobacteria</taxon>
        <taxon>Campylobacterales</taxon>
        <taxon>Campylobacteraceae</taxon>
        <taxon>Campylobacter</taxon>
    </lineage>
</organism>